<keyword id="KW-0028">Amino-acid biosynthesis</keyword>
<keyword id="KW-0057">Aromatic amino acid biosynthesis</keyword>
<keyword id="KW-0456">Lyase</keyword>
<sequence>MKKILVLHGPNLNLLGSREPSIYGHASLTQINGDLIQEADNAGIRLSCFQSNAEAELIQAVHQAGIDKINYIIINPAAFTHTSIALRDALSAVAIPFIEVHLSNIFSRETFRHHSYFSDIAVGVISGLGTKGYLLALQAIIKELK</sequence>
<accession>Q5WZ76</accession>
<dbReference type="EC" id="4.2.1.10" evidence="1"/>
<dbReference type="EMBL" id="CR628337">
    <property type="protein sequence ID" value="CAH14736.1"/>
    <property type="molecule type" value="Genomic_DNA"/>
</dbReference>
<dbReference type="RefSeq" id="WP_010946213.1">
    <property type="nucleotide sequence ID" value="NC_006369.1"/>
</dbReference>
<dbReference type="SMR" id="Q5WZ76"/>
<dbReference type="GeneID" id="57034466"/>
<dbReference type="KEGG" id="lpf:lpl0506"/>
<dbReference type="LegioList" id="lpl0506"/>
<dbReference type="HOGENOM" id="CLU_090968_1_0_6"/>
<dbReference type="UniPathway" id="UPA00053">
    <property type="reaction ID" value="UER00086"/>
</dbReference>
<dbReference type="Proteomes" id="UP000002517">
    <property type="component" value="Chromosome"/>
</dbReference>
<dbReference type="GO" id="GO:0003855">
    <property type="term" value="F:3-dehydroquinate dehydratase activity"/>
    <property type="evidence" value="ECO:0007669"/>
    <property type="project" value="UniProtKB-UniRule"/>
</dbReference>
<dbReference type="GO" id="GO:0008652">
    <property type="term" value="P:amino acid biosynthetic process"/>
    <property type="evidence" value="ECO:0007669"/>
    <property type="project" value="UniProtKB-KW"/>
</dbReference>
<dbReference type="GO" id="GO:0009073">
    <property type="term" value="P:aromatic amino acid family biosynthetic process"/>
    <property type="evidence" value="ECO:0007669"/>
    <property type="project" value="UniProtKB-KW"/>
</dbReference>
<dbReference type="GO" id="GO:0009423">
    <property type="term" value="P:chorismate biosynthetic process"/>
    <property type="evidence" value="ECO:0007669"/>
    <property type="project" value="UniProtKB-UniRule"/>
</dbReference>
<dbReference type="GO" id="GO:0019631">
    <property type="term" value="P:quinate catabolic process"/>
    <property type="evidence" value="ECO:0007669"/>
    <property type="project" value="TreeGrafter"/>
</dbReference>
<dbReference type="CDD" id="cd00466">
    <property type="entry name" value="DHQase_II"/>
    <property type="match status" value="1"/>
</dbReference>
<dbReference type="Gene3D" id="3.40.50.9100">
    <property type="entry name" value="Dehydroquinase, class II"/>
    <property type="match status" value="1"/>
</dbReference>
<dbReference type="HAMAP" id="MF_00169">
    <property type="entry name" value="AroQ"/>
    <property type="match status" value="1"/>
</dbReference>
<dbReference type="InterPro" id="IPR001874">
    <property type="entry name" value="DHquinase_II"/>
</dbReference>
<dbReference type="InterPro" id="IPR018509">
    <property type="entry name" value="DHquinase_II_CS"/>
</dbReference>
<dbReference type="InterPro" id="IPR036441">
    <property type="entry name" value="DHquinase_II_sf"/>
</dbReference>
<dbReference type="NCBIfam" id="TIGR01088">
    <property type="entry name" value="aroQ"/>
    <property type="match status" value="1"/>
</dbReference>
<dbReference type="NCBIfam" id="NF003804">
    <property type="entry name" value="PRK05395.1-1"/>
    <property type="match status" value="1"/>
</dbReference>
<dbReference type="NCBIfam" id="NF003805">
    <property type="entry name" value="PRK05395.1-2"/>
    <property type="match status" value="1"/>
</dbReference>
<dbReference type="NCBIfam" id="NF003806">
    <property type="entry name" value="PRK05395.1-3"/>
    <property type="match status" value="1"/>
</dbReference>
<dbReference type="NCBIfam" id="NF003807">
    <property type="entry name" value="PRK05395.1-4"/>
    <property type="match status" value="1"/>
</dbReference>
<dbReference type="PANTHER" id="PTHR21272">
    <property type="entry name" value="CATABOLIC 3-DEHYDROQUINASE"/>
    <property type="match status" value="1"/>
</dbReference>
<dbReference type="PANTHER" id="PTHR21272:SF3">
    <property type="entry name" value="CATABOLIC 3-DEHYDROQUINASE"/>
    <property type="match status" value="1"/>
</dbReference>
<dbReference type="Pfam" id="PF01220">
    <property type="entry name" value="DHquinase_II"/>
    <property type="match status" value="1"/>
</dbReference>
<dbReference type="PIRSF" id="PIRSF001399">
    <property type="entry name" value="DHquinase_II"/>
    <property type="match status" value="1"/>
</dbReference>
<dbReference type="SUPFAM" id="SSF52304">
    <property type="entry name" value="Type II 3-dehydroquinate dehydratase"/>
    <property type="match status" value="1"/>
</dbReference>
<dbReference type="PROSITE" id="PS01029">
    <property type="entry name" value="DEHYDROQUINASE_II"/>
    <property type="match status" value="1"/>
</dbReference>
<name>AROQ_LEGPL</name>
<comment type="function">
    <text evidence="1">Catalyzes a trans-dehydration via an enolate intermediate.</text>
</comment>
<comment type="catalytic activity">
    <reaction evidence="1">
        <text>3-dehydroquinate = 3-dehydroshikimate + H2O</text>
        <dbReference type="Rhea" id="RHEA:21096"/>
        <dbReference type="ChEBI" id="CHEBI:15377"/>
        <dbReference type="ChEBI" id="CHEBI:16630"/>
        <dbReference type="ChEBI" id="CHEBI:32364"/>
        <dbReference type="EC" id="4.2.1.10"/>
    </reaction>
</comment>
<comment type="pathway">
    <text evidence="1">Metabolic intermediate biosynthesis; chorismate biosynthesis; chorismate from D-erythrose 4-phosphate and phosphoenolpyruvate: step 3/7.</text>
</comment>
<comment type="subunit">
    <text evidence="1">Homododecamer.</text>
</comment>
<comment type="similarity">
    <text evidence="1">Belongs to the type-II 3-dehydroquinase family.</text>
</comment>
<proteinExistence type="inferred from homology"/>
<feature type="chain" id="PRO_1000077048" description="3-dehydroquinate dehydratase">
    <location>
        <begin position="1"/>
        <end position="145"/>
    </location>
</feature>
<feature type="active site" description="Proton acceptor" evidence="1">
    <location>
        <position position="23"/>
    </location>
</feature>
<feature type="active site" description="Proton donor" evidence="1">
    <location>
        <position position="101"/>
    </location>
</feature>
<feature type="binding site" evidence="1">
    <location>
        <position position="75"/>
    </location>
    <ligand>
        <name>substrate</name>
    </ligand>
</feature>
<feature type="binding site" evidence="1">
    <location>
        <position position="81"/>
    </location>
    <ligand>
        <name>substrate</name>
    </ligand>
</feature>
<feature type="binding site" evidence="1">
    <location>
        <position position="88"/>
    </location>
    <ligand>
        <name>substrate</name>
    </ligand>
</feature>
<feature type="binding site" evidence="1">
    <location>
        <begin position="102"/>
        <end position="103"/>
    </location>
    <ligand>
        <name>substrate</name>
    </ligand>
</feature>
<feature type="binding site" evidence="1">
    <location>
        <position position="112"/>
    </location>
    <ligand>
        <name>substrate</name>
    </ligand>
</feature>
<feature type="site" description="Transition state stabilizer" evidence="1">
    <location>
        <position position="18"/>
    </location>
</feature>
<evidence type="ECO:0000255" key="1">
    <source>
        <dbReference type="HAMAP-Rule" id="MF_00169"/>
    </source>
</evidence>
<protein>
    <recommendedName>
        <fullName evidence="1">3-dehydroquinate dehydratase</fullName>
        <shortName evidence="1">3-dehydroquinase</shortName>
        <ecNumber evidence="1">4.2.1.10</ecNumber>
    </recommendedName>
    <alternativeName>
        <fullName evidence="1">Type II DHQase</fullName>
    </alternativeName>
</protein>
<reference key="1">
    <citation type="journal article" date="2004" name="Nat. Genet.">
        <title>Evidence in the Legionella pneumophila genome for exploitation of host cell functions and high genome plasticity.</title>
        <authorList>
            <person name="Cazalet C."/>
            <person name="Rusniok C."/>
            <person name="Brueggemann H."/>
            <person name="Zidane N."/>
            <person name="Magnier A."/>
            <person name="Ma L."/>
            <person name="Tichit M."/>
            <person name="Jarraud S."/>
            <person name="Bouchier C."/>
            <person name="Vandenesch F."/>
            <person name="Kunst F."/>
            <person name="Etienne J."/>
            <person name="Glaser P."/>
            <person name="Buchrieser C."/>
        </authorList>
    </citation>
    <scope>NUCLEOTIDE SEQUENCE [LARGE SCALE GENOMIC DNA]</scope>
    <source>
        <strain>Lens</strain>
    </source>
</reference>
<gene>
    <name evidence="1" type="primary">aroQ</name>
    <name type="ordered locus">lpl0506</name>
</gene>
<organism>
    <name type="scientific">Legionella pneumophila (strain Lens)</name>
    <dbReference type="NCBI Taxonomy" id="297245"/>
    <lineage>
        <taxon>Bacteria</taxon>
        <taxon>Pseudomonadati</taxon>
        <taxon>Pseudomonadota</taxon>
        <taxon>Gammaproteobacteria</taxon>
        <taxon>Legionellales</taxon>
        <taxon>Legionellaceae</taxon>
        <taxon>Legionella</taxon>
    </lineage>
</organism>